<name>MD341_PENRW</name>
<sequence>MAFKFNWSPLIADASFYTRAQDLLTAALNKSPKPPIIVGDITVTELNLGSIPPELEILEIGDLAEDRFRGIFKMSYTGDAFLTLKTRVQANPLNTYLITRPSFASPLPLAAATPLTIPLQITLSDFKLSGFVILVFSEQKGITLVFRNDPLESLKVSSTFDSIPFVRDFLQGEIEAQLRILFIDELPAIIHRLSLQLWDPEYRAEEIQNQMNTTLTPTKGPGHDPLVTPPQDPVDSLGNVLDESDIASLSLDSAAETHSLFSQKNLLSLATLTDSQRTLSLFTPSIQQVVYRAWSSPDQNDSSASVMSPISPPLSRTQSQTGGIFASIDNASTSSAQSRTPTGPTQSFSSYGLSLGASRHSRAHARRRKKRVVDLRSRPTTPSDSASVSVSDESTYTESASAPSVTSAPLQAIHEQPDDPVTPPLSPESDQSLPAIVEERRLSLSRSLPRRDLSSEIVRDRAEPSEPRNPFNTDDVIVTVGSVRPTPHQEASPPLGPTRQLSAAGLPFPHDSSTGSVVDQVFLDTLAGEVARRMRDEKLMAPNSCGTFCGHGLPEEPPPPAYGQ</sequence>
<proteinExistence type="inferred from homology"/>
<feature type="chain" id="PRO_0000384354" description="Mitochondrial distribution and morphology protein 34-1">
    <location>
        <begin position="1"/>
        <end position="564"/>
    </location>
</feature>
<feature type="domain" description="SMP-LTD" evidence="1">
    <location>
        <begin position="1"/>
        <end position="195"/>
    </location>
</feature>
<feature type="region of interest" description="Disordered" evidence="2">
    <location>
        <begin position="297"/>
        <end position="408"/>
    </location>
</feature>
<feature type="region of interest" description="Disordered" evidence="2">
    <location>
        <begin position="414"/>
        <end position="433"/>
    </location>
</feature>
<feature type="region of interest" description="Disordered" evidence="2">
    <location>
        <begin position="452"/>
        <end position="473"/>
    </location>
</feature>
<feature type="compositionally biased region" description="Polar residues" evidence="2">
    <location>
        <begin position="297"/>
        <end position="322"/>
    </location>
</feature>
<feature type="compositionally biased region" description="Polar residues" evidence="2">
    <location>
        <begin position="329"/>
        <end position="352"/>
    </location>
</feature>
<feature type="compositionally biased region" description="Basic residues" evidence="2">
    <location>
        <begin position="359"/>
        <end position="371"/>
    </location>
</feature>
<feature type="compositionally biased region" description="Low complexity" evidence="2">
    <location>
        <begin position="383"/>
        <end position="394"/>
    </location>
</feature>
<feature type="compositionally biased region" description="Polar residues" evidence="2">
    <location>
        <begin position="396"/>
        <end position="408"/>
    </location>
</feature>
<feature type="compositionally biased region" description="Basic and acidic residues" evidence="2">
    <location>
        <begin position="452"/>
        <end position="466"/>
    </location>
</feature>
<dbReference type="EMBL" id="AM920437">
    <property type="protein sequence ID" value="CAP99254.1"/>
    <property type="molecule type" value="Genomic_DNA"/>
</dbReference>
<dbReference type="RefSeq" id="XP_002565868.1">
    <property type="nucleotide sequence ID" value="XM_002565822.1"/>
</dbReference>
<dbReference type="SMR" id="B6HQ08"/>
<dbReference type="STRING" id="500485.B6HQ08"/>
<dbReference type="GeneID" id="8315969"/>
<dbReference type="KEGG" id="pcs:N7525_004395"/>
<dbReference type="VEuPathDB" id="FungiDB:PCH_Pc22g19660"/>
<dbReference type="eggNOG" id="ENOG502QT3W">
    <property type="taxonomic scope" value="Eukaryota"/>
</dbReference>
<dbReference type="HOGENOM" id="CLU_036502_1_0_1"/>
<dbReference type="OMA" id="QVVYRAW"/>
<dbReference type="OrthoDB" id="17927at2759"/>
<dbReference type="BioCyc" id="PCHR:PC22G19660-MONOMER"/>
<dbReference type="Proteomes" id="UP000000724">
    <property type="component" value="Contig Pc00c22"/>
</dbReference>
<dbReference type="GO" id="GO:0032865">
    <property type="term" value="C:ERMES complex"/>
    <property type="evidence" value="ECO:0007669"/>
    <property type="project" value="UniProtKB-UniRule"/>
</dbReference>
<dbReference type="GO" id="GO:0008289">
    <property type="term" value="F:lipid binding"/>
    <property type="evidence" value="ECO:0007669"/>
    <property type="project" value="UniProtKB-KW"/>
</dbReference>
<dbReference type="GO" id="GO:0000002">
    <property type="term" value="P:mitochondrial genome maintenance"/>
    <property type="evidence" value="ECO:0007669"/>
    <property type="project" value="UniProtKB-UniRule"/>
</dbReference>
<dbReference type="GO" id="GO:1990456">
    <property type="term" value="P:mitochondrion-endoplasmic reticulum membrane tethering"/>
    <property type="evidence" value="ECO:0007669"/>
    <property type="project" value="TreeGrafter"/>
</dbReference>
<dbReference type="GO" id="GO:0015914">
    <property type="term" value="P:phospholipid transport"/>
    <property type="evidence" value="ECO:0007669"/>
    <property type="project" value="TreeGrafter"/>
</dbReference>
<dbReference type="CDD" id="cd21673">
    <property type="entry name" value="SMP_Mdm34"/>
    <property type="match status" value="1"/>
</dbReference>
<dbReference type="HAMAP" id="MF_03105">
    <property type="entry name" value="Mdm34"/>
    <property type="match status" value="1"/>
</dbReference>
<dbReference type="InterPro" id="IPR027536">
    <property type="entry name" value="Mdm34"/>
</dbReference>
<dbReference type="InterPro" id="IPR031468">
    <property type="entry name" value="SMP_LBD"/>
</dbReference>
<dbReference type="PANTHER" id="PTHR28185">
    <property type="entry name" value="MITOCHONDRIAL DISTRIBUTION AND MORPHOLOGY PROTEIN 34"/>
    <property type="match status" value="1"/>
</dbReference>
<dbReference type="PANTHER" id="PTHR28185:SF1">
    <property type="entry name" value="MITOCHONDRIAL DISTRIBUTION AND MORPHOLOGY PROTEIN 34"/>
    <property type="match status" value="1"/>
</dbReference>
<dbReference type="PROSITE" id="PS51847">
    <property type="entry name" value="SMP"/>
    <property type="match status" value="1"/>
</dbReference>
<organism>
    <name type="scientific">Penicillium rubens (strain ATCC 28089 / DSM 1075 / NRRL 1951 / Wisconsin 54-1255)</name>
    <name type="common">Penicillium chrysogenum</name>
    <dbReference type="NCBI Taxonomy" id="500485"/>
    <lineage>
        <taxon>Eukaryota</taxon>
        <taxon>Fungi</taxon>
        <taxon>Dikarya</taxon>
        <taxon>Ascomycota</taxon>
        <taxon>Pezizomycotina</taxon>
        <taxon>Eurotiomycetes</taxon>
        <taxon>Eurotiomycetidae</taxon>
        <taxon>Eurotiales</taxon>
        <taxon>Aspergillaceae</taxon>
        <taxon>Penicillium</taxon>
        <taxon>Penicillium chrysogenum species complex</taxon>
    </lineage>
</organism>
<reference key="1">
    <citation type="journal article" date="2008" name="Nat. Biotechnol.">
        <title>Genome sequencing and analysis of the filamentous fungus Penicillium chrysogenum.</title>
        <authorList>
            <person name="van den Berg M.A."/>
            <person name="Albang R."/>
            <person name="Albermann K."/>
            <person name="Badger J.H."/>
            <person name="Daran J.-M."/>
            <person name="Driessen A.J.M."/>
            <person name="Garcia-Estrada C."/>
            <person name="Fedorova N.D."/>
            <person name="Harris D.M."/>
            <person name="Heijne W.H.M."/>
            <person name="Joardar V.S."/>
            <person name="Kiel J.A.K.W."/>
            <person name="Kovalchuk A."/>
            <person name="Martin J.F."/>
            <person name="Nierman W.C."/>
            <person name="Nijland J.G."/>
            <person name="Pronk J.T."/>
            <person name="Roubos J.A."/>
            <person name="van der Klei I.J."/>
            <person name="van Peij N.N.M.E."/>
            <person name="Veenhuis M."/>
            <person name="von Doehren H."/>
            <person name="Wagner C."/>
            <person name="Wortman J.R."/>
            <person name="Bovenberg R.A.L."/>
        </authorList>
    </citation>
    <scope>NUCLEOTIDE SEQUENCE [LARGE SCALE GENOMIC DNA]</scope>
    <source>
        <strain>ATCC 28089 / DSM 1075 / NRRL 1951 / Wisconsin 54-1255</strain>
    </source>
</reference>
<comment type="function">
    <text evidence="1">Component of the ERMES/MDM complex, which serves as a molecular tether to connect the endoplasmic reticulum (ER) and mitochondria. Components of this complex are involved in the control of mitochondrial shape and protein biogenesis, and function in nonvesicular lipid trafficking between the ER and mitochondria. Mdm34 is required for the interaction of the ER-resident membrane protein mmm1 and the outer mitochondrial membrane-resident beta-barrel protein mdm10.</text>
</comment>
<comment type="subunit">
    <text evidence="1">Component of the ER-mitochondria encounter structure (ERMES) or MDM complex, composed of mmm1, mdm10, mdm12 and mdm34.</text>
</comment>
<comment type="subcellular location">
    <subcellularLocation>
        <location evidence="1">Mitochondrion outer membrane</location>
        <topology evidence="1">Multi-pass membrane protein</topology>
    </subcellularLocation>
    <text evidence="1">The ERMES/MDM complex localizes to a few discrete foci (around 10 per single cell), that represent mitochondria-endoplasmic reticulum junctions. These foci are often found next to mtDNA nucleoids.</text>
</comment>
<comment type="domain">
    <text evidence="1">Lacks alpha-helical transmembrane segments, suggesting that it resides in the membrane via beta-sheet conformations similar to those predicted for other outer membrane proteins and porin.</text>
</comment>
<comment type="domain">
    <text evidence="1">The SMP-LTD domain is a barrel-like domain that can bind various types of glycerophospholipids in its interior and mediate their transfer between two adjacent bilayers.</text>
</comment>
<comment type="similarity">
    <text evidence="1">Belongs to the MDM34 family.</text>
</comment>
<evidence type="ECO:0000255" key="1">
    <source>
        <dbReference type="HAMAP-Rule" id="MF_03105"/>
    </source>
</evidence>
<evidence type="ECO:0000256" key="2">
    <source>
        <dbReference type="SAM" id="MobiDB-lite"/>
    </source>
</evidence>
<gene>
    <name evidence="1" type="primary">mdm34-1</name>
    <name type="ORF">Pc22g19660</name>
</gene>
<keyword id="KW-0445">Lipid transport</keyword>
<keyword id="KW-0446">Lipid-binding</keyword>
<keyword id="KW-0472">Membrane</keyword>
<keyword id="KW-0496">Mitochondrion</keyword>
<keyword id="KW-1000">Mitochondrion outer membrane</keyword>
<keyword id="KW-1185">Reference proteome</keyword>
<keyword id="KW-0812">Transmembrane</keyword>
<keyword id="KW-1134">Transmembrane beta strand</keyword>
<keyword id="KW-0813">Transport</keyword>
<accession>B6HQ08</accession>
<protein>
    <recommendedName>
        <fullName evidence="1">Mitochondrial distribution and morphology protein 34-1</fullName>
    </recommendedName>
</protein>